<gene>
    <name type="ordered locus">At5g41760</name>
    <name type="ORF">K16L22.3</name>
</gene>
<protein>
    <recommendedName>
        <fullName>CMP-sialic acid transporter 1</fullName>
        <shortName>CMP-SA-Tr 1</shortName>
        <shortName>CMP-Sia-Tr 1</shortName>
    </recommendedName>
</protein>
<reference key="1">
    <citation type="journal article" date="1998" name="DNA Res.">
        <title>Structural analysis of Arabidopsis thaliana chromosome 5. VII. Sequence features of the regions of 1,013,767 bp covered by sixteen physically assigned P1 and TAC clones.</title>
        <authorList>
            <person name="Nakamura Y."/>
            <person name="Sato S."/>
            <person name="Asamizu E."/>
            <person name="Kaneko T."/>
            <person name="Kotani H."/>
            <person name="Miyajima N."/>
            <person name="Tabata S."/>
        </authorList>
    </citation>
    <scope>NUCLEOTIDE SEQUENCE [LARGE SCALE GENOMIC DNA]</scope>
    <source>
        <strain>cv. Columbia</strain>
    </source>
</reference>
<reference key="2">
    <citation type="journal article" date="2017" name="Plant J.">
        <title>Araport11: a complete reannotation of the Arabidopsis thaliana reference genome.</title>
        <authorList>
            <person name="Cheng C.Y."/>
            <person name="Krishnakumar V."/>
            <person name="Chan A.P."/>
            <person name="Thibaud-Nissen F."/>
            <person name="Schobel S."/>
            <person name="Town C.D."/>
        </authorList>
    </citation>
    <scope>GENOME REANNOTATION</scope>
    <source>
        <strain>cv. Columbia</strain>
    </source>
</reference>
<reference key="3">
    <citation type="journal article" date="2003" name="Science">
        <title>Empirical analysis of transcriptional activity in the Arabidopsis genome.</title>
        <authorList>
            <person name="Yamada K."/>
            <person name="Lim J."/>
            <person name="Dale J.M."/>
            <person name="Chen H."/>
            <person name="Shinn P."/>
            <person name="Palm C.J."/>
            <person name="Southwick A.M."/>
            <person name="Wu H.C."/>
            <person name="Kim C.J."/>
            <person name="Nguyen M."/>
            <person name="Pham P.K."/>
            <person name="Cheuk R.F."/>
            <person name="Karlin-Newmann G."/>
            <person name="Liu S.X."/>
            <person name="Lam B."/>
            <person name="Sakano H."/>
            <person name="Wu T."/>
            <person name="Yu G."/>
            <person name="Miranda M."/>
            <person name="Quach H.L."/>
            <person name="Tripp M."/>
            <person name="Chang C.H."/>
            <person name="Lee J.M."/>
            <person name="Toriumi M.J."/>
            <person name="Chan M.M."/>
            <person name="Tang C.C."/>
            <person name="Onodera C.S."/>
            <person name="Deng J.M."/>
            <person name="Akiyama K."/>
            <person name="Ansari Y."/>
            <person name="Arakawa T."/>
            <person name="Banh J."/>
            <person name="Banno F."/>
            <person name="Bowser L."/>
            <person name="Brooks S.Y."/>
            <person name="Carninci P."/>
            <person name="Chao Q."/>
            <person name="Choy N."/>
            <person name="Enju A."/>
            <person name="Goldsmith A.D."/>
            <person name="Gurjal M."/>
            <person name="Hansen N.F."/>
            <person name="Hayashizaki Y."/>
            <person name="Johnson-Hopson C."/>
            <person name="Hsuan V.W."/>
            <person name="Iida K."/>
            <person name="Karnes M."/>
            <person name="Khan S."/>
            <person name="Koesema E."/>
            <person name="Ishida J."/>
            <person name="Jiang P.X."/>
            <person name="Jones T."/>
            <person name="Kawai J."/>
            <person name="Kamiya A."/>
            <person name="Meyers C."/>
            <person name="Nakajima M."/>
            <person name="Narusaka M."/>
            <person name="Seki M."/>
            <person name="Sakurai T."/>
            <person name="Satou M."/>
            <person name="Tamse R."/>
            <person name="Vaysberg M."/>
            <person name="Wallender E.K."/>
            <person name="Wong C."/>
            <person name="Yamamura Y."/>
            <person name="Yuan S."/>
            <person name="Shinozaki K."/>
            <person name="Davis R.W."/>
            <person name="Theologis A."/>
            <person name="Ecker J.R."/>
        </authorList>
    </citation>
    <scope>NUCLEOTIDE SEQUENCE [LARGE SCALE MRNA]</scope>
    <source>
        <strain>cv. Columbia</strain>
    </source>
</reference>
<reference key="4">
    <citation type="submission" date="2002-03" db="EMBL/GenBank/DDBJ databases">
        <title>Full-length cDNA from Arabidopsis thaliana.</title>
        <authorList>
            <person name="Brover V.V."/>
            <person name="Troukhan M.E."/>
            <person name="Alexandrov N.A."/>
            <person name="Lu Y.-P."/>
            <person name="Flavell R.B."/>
            <person name="Feldmann K.A."/>
        </authorList>
    </citation>
    <scope>NUCLEOTIDE SEQUENCE [LARGE SCALE MRNA]</scope>
</reference>
<reference key="5">
    <citation type="journal article" date="2005" name="Glycobiology">
        <title>Molecular cloning of two Arabidopsis UDP-galactose transporters by complementation of a deficient Chinese hamster ovary cell line.</title>
        <authorList>
            <person name="Bakker H."/>
            <person name="Routier F."/>
            <person name="Oelmann S."/>
            <person name="Jordi W."/>
            <person name="Lommen A."/>
            <person name="Gerardy-Schahn R."/>
            <person name="Bosch D."/>
        </authorList>
    </citation>
    <scope>GENE FAMILY</scope>
</reference>
<reference key="6">
    <citation type="journal article" date="2008" name="Carbohydr. Res.">
        <title>A CMP-sialic acid transporter cloned from Arabidopsis thaliana.</title>
        <authorList>
            <person name="Bakker H."/>
            <person name="Routier F."/>
            <person name="Ashikov A."/>
            <person name="Neumann D."/>
            <person name="Bosch D."/>
            <person name="Gerardy-Schahn R."/>
        </authorList>
    </citation>
    <scope>FUNCTION</scope>
</reference>
<reference key="7">
    <citation type="journal article" date="2009" name="Phytochemistry">
        <title>Analysis of CMP-sialic acid transporter-like proteins in plants.</title>
        <authorList>
            <person name="Takashima S."/>
            <person name="Seino J."/>
            <person name="Nakano T."/>
            <person name="Fujiyama K."/>
            <person name="Tsujimoto M."/>
            <person name="Ishida N."/>
            <person name="Hashimoto Y."/>
        </authorList>
    </citation>
    <scope>FUNCTION</scope>
</reference>
<reference key="8">
    <citation type="journal article" date="2014" name="Proc. Natl. Acad. Sci. U.S.A.">
        <title>The Golgi localized bifunctional UDP-rhamnose/UDP-galactose transporter family of Arabidopsis.</title>
        <authorList>
            <person name="Rautengarten C."/>
            <person name="Ebert B."/>
            <person name="Moreno I."/>
            <person name="Temple H."/>
            <person name="Herter T."/>
            <person name="Link B."/>
            <person name="Donas-Cofre D."/>
            <person name="Moreno A."/>
            <person name="Saez-Aguayo S."/>
            <person name="Blanco F."/>
            <person name="Mortimer J.C."/>
            <person name="Schultink A."/>
            <person name="Reiter W.D."/>
            <person name="Dupree P."/>
            <person name="Pauly M."/>
            <person name="Heazlewood J.L."/>
            <person name="Scheller H.V."/>
            <person name="Orellana A."/>
        </authorList>
    </citation>
    <scope>GENE FAMILY</scope>
</reference>
<organism>
    <name type="scientific">Arabidopsis thaliana</name>
    <name type="common">Mouse-ear cress</name>
    <dbReference type="NCBI Taxonomy" id="3702"/>
    <lineage>
        <taxon>Eukaryota</taxon>
        <taxon>Viridiplantae</taxon>
        <taxon>Streptophyta</taxon>
        <taxon>Embryophyta</taxon>
        <taxon>Tracheophyta</taxon>
        <taxon>Spermatophyta</taxon>
        <taxon>Magnoliopsida</taxon>
        <taxon>eudicotyledons</taxon>
        <taxon>Gunneridae</taxon>
        <taxon>Pentapetalae</taxon>
        <taxon>rosids</taxon>
        <taxon>malvids</taxon>
        <taxon>Brassicales</taxon>
        <taxon>Brassicaceae</taxon>
        <taxon>Camelineae</taxon>
        <taxon>Arabidopsis</taxon>
    </lineage>
</organism>
<accession>Q8LGE9</accession>
<accession>Q9FJ38</accession>
<name>CSTR1_ARATH</name>
<sequence length="340" mass="38212">MAATPWYFVAVLLTILTSSQGILTTLSQSDGGYKYDYATVPFLAEVFKLIISGLFLWREMRTSSSTTSRITTDWKSVRLFVIPSLIYLIHNNVQFATLTYVDTSTYQIMGNLKIVTTGILFRLFLKRKLSKLQWMAIGLLAVGTTTSQVKGCGEASCDSLFTAPIQGYLLGILSAGLSALAGIYTEFLMKRNNDTLYWQNLQLYTFGSLFNVARLIADDFRHGFEKGPWWQRIFDGYSITTWLVVLNLGSTGLLVSWLMKYADNIVKVYSTSMAMLLTMVASIYLFSFKPTLQLFLGIVICIMSLHMYFAPPHTLVDLPVTNEAHAKTLKQVVVEEKTDS</sequence>
<keyword id="KW-0333">Golgi apparatus</keyword>
<keyword id="KW-0472">Membrane</keyword>
<keyword id="KW-1185">Reference proteome</keyword>
<keyword id="KW-0762">Sugar transport</keyword>
<keyword id="KW-0812">Transmembrane</keyword>
<keyword id="KW-1133">Transmembrane helix</keyword>
<keyword id="KW-0813">Transport</keyword>
<feature type="chain" id="PRO_0000416024" description="CMP-sialic acid transporter 1">
    <location>
        <begin position="1"/>
        <end position="340"/>
    </location>
</feature>
<feature type="topological domain" description="Cytoplasmic" evidence="2">
    <location>
        <begin position="1"/>
        <end position="5"/>
    </location>
</feature>
<feature type="transmembrane region" description="Helical" evidence="2">
    <location>
        <begin position="6"/>
        <end position="26"/>
    </location>
</feature>
<feature type="topological domain" description="Lumenal" evidence="2">
    <location>
        <begin position="27"/>
        <end position="36"/>
    </location>
</feature>
<feature type="transmembrane region" description="Helical" evidence="2">
    <location>
        <begin position="37"/>
        <end position="57"/>
    </location>
</feature>
<feature type="topological domain" description="Cytoplasmic" evidence="2">
    <location>
        <begin position="58"/>
        <end position="78"/>
    </location>
</feature>
<feature type="transmembrane region" description="Helical" evidence="2">
    <location>
        <begin position="79"/>
        <end position="99"/>
    </location>
</feature>
<feature type="topological domain" description="Lumenal" evidence="2">
    <location>
        <begin position="100"/>
        <end position="102"/>
    </location>
</feature>
<feature type="transmembrane region" description="Helical" evidence="2">
    <location>
        <begin position="103"/>
        <end position="125"/>
    </location>
</feature>
<feature type="topological domain" description="Cytoplasmic" evidence="2">
    <location>
        <begin position="126"/>
        <end position="168"/>
    </location>
</feature>
<feature type="transmembrane region" description="Helical" evidence="2">
    <location>
        <begin position="169"/>
        <end position="189"/>
    </location>
</feature>
<feature type="topological domain" description="Lumenal" evidence="2">
    <location>
        <begin position="190"/>
        <end position="200"/>
    </location>
</feature>
<feature type="transmembrane region" description="Helical" evidence="2">
    <location>
        <begin position="201"/>
        <end position="217"/>
    </location>
</feature>
<feature type="topological domain" description="Cytoplasmic" evidence="2">
    <location>
        <begin position="218"/>
        <end position="238"/>
    </location>
</feature>
<feature type="transmembrane region" description="Helical" evidence="2">
    <location>
        <begin position="239"/>
        <end position="259"/>
    </location>
</feature>
<feature type="topological domain" description="Lumenal" evidence="2">
    <location>
        <begin position="260"/>
        <end position="282"/>
    </location>
</feature>
<feature type="transmembrane region" description="Helical" evidence="2">
    <location>
        <begin position="283"/>
        <end position="303"/>
    </location>
</feature>
<feature type="topological domain" description="Cytoplasmic" evidence="2">
    <location>
        <begin position="304"/>
        <end position="340"/>
    </location>
</feature>
<comment type="function">
    <text evidence="3 4">Essential protein. Sugar transporter involved in the transport of CMP-sialic acid from the cytoplasm into the Golgi.</text>
</comment>
<comment type="subcellular location">
    <subcellularLocation>
        <location evidence="1">Golgi apparatus membrane</location>
        <topology evidence="1">Multi-pass membrane protein</topology>
    </subcellularLocation>
</comment>
<comment type="similarity">
    <text evidence="5">Belongs to the nucleotide-sugar transporter family. CMP-Sialate:CMP antiporter (TC 2.A.7.12) subfamily.</text>
</comment>
<comment type="sequence caution" evidence="5">
    <conflict type="erroneous gene model prediction">
        <sequence resource="EMBL-CDS" id="BAB10651"/>
    </conflict>
</comment>
<proteinExistence type="evidence at transcript level"/>
<evidence type="ECO:0000250" key="1"/>
<evidence type="ECO:0000255" key="2"/>
<evidence type="ECO:0000269" key="3">
    <source>
    </source>
</evidence>
<evidence type="ECO:0000269" key="4">
    <source>
    </source>
</evidence>
<evidence type="ECO:0000305" key="5"/>
<dbReference type="EMBL" id="AB016871">
    <property type="protein sequence ID" value="BAB10651.1"/>
    <property type="status" value="ALT_SEQ"/>
    <property type="molecule type" value="Genomic_DNA"/>
</dbReference>
<dbReference type="EMBL" id="CP002688">
    <property type="protein sequence ID" value="AED94722.1"/>
    <property type="molecule type" value="Genomic_DNA"/>
</dbReference>
<dbReference type="EMBL" id="CP002688">
    <property type="protein sequence ID" value="AED94723.1"/>
    <property type="molecule type" value="Genomic_DNA"/>
</dbReference>
<dbReference type="EMBL" id="BT004304">
    <property type="protein sequence ID" value="AAO42302.1"/>
    <property type="molecule type" value="mRNA"/>
</dbReference>
<dbReference type="EMBL" id="BT005532">
    <property type="protein sequence ID" value="AAO63952.1"/>
    <property type="molecule type" value="mRNA"/>
</dbReference>
<dbReference type="EMBL" id="AY084311">
    <property type="protein sequence ID" value="AAM60900.1"/>
    <property type="molecule type" value="mRNA"/>
</dbReference>
<dbReference type="RefSeq" id="NP_001031992.1">
    <property type="nucleotide sequence ID" value="NM_001036915.4"/>
</dbReference>
<dbReference type="RefSeq" id="NP_568596.1">
    <property type="nucleotide sequence ID" value="NM_123541.5"/>
</dbReference>
<dbReference type="SMR" id="Q8LGE9"/>
<dbReference type="FunCoup" id="Q8LGE9">
    <property type="interactions" value="2857"/>
</dbReference>
<dbReference type="STRING" id="3702.Q8LGE9"/>
<dbReference type="PaxDb" id="3702-AT5G41760.2"/>
<dbReference type="ProteomicsDB" id="222717"/>
<dbReference type="EnsemblPlants" id="AT5G41760.1">
    <property type="protein sequence ID" value="AT5G41760.1"/>
    <property type="gene ID" value="AT5G41760"/>
</dbReference>
<dbReference type="EnsemblPlants" id="AT5G41760.2">
    <property type="protein sequence ID" value="AT5G41760.2"/>
    <property type="gene ID" value="AT5G41760"/>
</dbReference>
<dbReference type="GeneID" id="834180"/>
<dbReference type="Gramene" id="AT5G41760.1">
    <property type="protein sequence ID" value="AT5G41760.1"/>
    <property type="gene ID" value="AT5G41760"/>
</dbReference>
<dbReference type="Gramene" id="AT5G41760.2">
    <property type="protein sequence ID" value="AT5G41760.2"/>
    <property type="gene ID" value="AT5G41760"/>
</dbReference>
<dbReference type="KEGG" id="ath:AT5G41760"/>
<dbReference type="Araport" id="AT5G41760"/>
<dbReference type="TAIR" id="AT5G41760"/>
<dbReference type="eggNOG" id="KOG2234">
    <property type="taxonomic scope" value="Eukaryota"/>
</dbReference>
<dbReference type="HOGENOM" id="CLU_024645_5_1_1"/>
<dbReference type="InParanoid" id="Q8LGE9"/>
<dbReference type="OMA" id="IEEDMMT"/>
<dbReference type="OrthoDB" id="408493at2759"/>
<dbReference type="PhylomeDB" id="Q8LGE9"/>
<dbReference type="PRO" id="PR:Q8LGE9"/>
<dbReference type="Proteomes" id="UP000006548">
    <property type="component" value="Chromosome 5"/>
</dbReference>
<dbReference type="ExpressionAtlas" id="Q8LGE9">
    <property type="expression patterns" value="baseline and differential"/>
</dbReference>
<dbReference type="GO" id="GO:0000139">
    <property type="term" value="C:Golgi membrane"/>
    <property type="evidence" value="ECO:0007669"/>
    <property type="project" value="UniProtKB-SubCell"/>
</dbReference>
<dbReference type="GO" id="GO:0015165">
    <property type="term" value="F:pyrimidine nucleotide-sugar transmembrane transporter activity"/>
    <property type="evidence" value="ECO:0007669"/>
    <property type="project" value="InterPro"/>
</dbReference>
<dbReference type="GO" id="GO:0015136">
    <property type="term" value="F:sialic acid transmembrane transporter activity"/>
    <property type="evidence" value="ECO:0000314"/>
    <property type="project" value="UniProtKB"/>
</dbReference>
<dbReference type="GO" id="GO:0015739">
    <property type="term" value="P:sialic acid transport"/>
    <property type="evidence" value="ECO:0000314"/>
    <property type="project" value="UniProtKB"/>
</dbReference>
<dbReference type="InterPro" id="IPR007271">
    <property type="entry name" value="Nuc_sug_transpt"/>
</dbReference>
<dbReference type="NCBIfam" id="TIGR00803">
    <property type="entry name" value="nst"/>
    <property type="match status" value="1"/>
</dbReference>
<dbReference type="PANTHER" id="PTHR10231">
    <property type="entry name" value="NUCLEOTIDE-SUGAR TRANSMEMBRANE TRANSPORTER"/>
    <property type="match status" value="1"/>
</dbReference>
<dbReference type="Pfam" id="PF04142">
    <property type="entry name" value="Nuc_sug_transp"/>
    <property type="match status" value="1"/>
</dbReference>
<dbReference type="PIRSF" id="PIRSF005799">
    <property type="entry name" value="UDP-gal_transpt"/>
    <property type="match status" value="1"/>
</dbReference>
<dbReference type="SUPFAM" id="SSF103481">
    <property type="entry name" value="Multidrug resistance efflux transporter EmrE"/>
    <property type="match status" value="1"/>
</dbReference>